<accession>F1Q8K0</accession>
<accession>Q7ZV09</accession>
<reference key="1">
    <citation type="journal article" date="2013" name="Nature">
        <title>The zebrafish reference genome sequence and its relationship to the human genome.</title>
        <authorList>
            <person name="Howe K."/>
            <person name="Clark M.D."/>
            <person name="Torroja C.F."/>
            <person name="Torrance J."/>
            <person name="Berthelot C."/>
            <person name="Muffato M."/>
            <person name="Collins J.E."/>
            <person name="Humphray S."/>
            <person name="McLaren K."/>
            <person name="Matthews L."/>
            <person name="McLaren S."/>
            <person name="Sealy I."/>
            <person name="Caccamo M."/>
            <person name="Churcher C."/>
            <person name="Scott C."/>
            <person name="Barrett J.C."/>
            <person name="Koch R."/>
            <person name="Rauch G.J."/>
            <person name="White S."/>
            <person name="Chow W."/>
            <person name="Kilian B."/>
            <person name="Quintais L.T."/>
            <person name="Guerra-Assuncao J.A."/>
            <person name="Zhou Y."/>
            <person name="Gu Y."/>
            <person name="Yen J."/>
            <person name="Vogel J.H."/>
            <person name="Eyre T."/>
            <person name="Redmond S."/>
            <person name="Banerjee R."/>
            <person name="Chi J."/>
            <person name="Fu B."/>
            <person name="Langley E."/>
            <person name="Maguire S.F."/>
            <person name="Laird G.K."/>
            <person name="Lloyd D."/>
            <person name="Kenyon E."/>
            <person name="Donaldson S."/>
            <person name="Sehra H."/>
            <person name="Almeida-King J."/>
            <person name="Loveland J."/>
            <person name="Trevanion S."/>
            <person name="Jones M."/>
            <person name="Quail M."/>
            <person name="Willey D."/>
            <person name="Hunt A."/>
            <person name="Burton J."/>
            <person name="Sims S."/>
            <person name="McLay K."/>
            <person name="Plumb B."/>
            <person name="Davis J."/>
            <person name="Clee C."/>
            <person name="Oliver K."/>
            <person name="Clark R."/>
            <person name="Riddle C."/>
            <person name="Elliot D."/>
            <person name="Threadgold G."/>
            <person name="Harden G."/>
            <person name="Ware D."/>
            <person name="Begum S."/>
            <person name="Mortimore B."/>
            <person name="Kerry G."/>
            <person name="Heath P."/>
            <person name="Phillimore B."/>
            <person name="Tracey A."/>
            <person name="Corby N."/>
            <person name="Dunn M."/>
            <person name="Johnson C."/>
            <person name="Wood J."/>
            <person name="Clark S."/>
            <person name="Pelan S."/>
            <person name="Griffiths G."/>
            <person name="Smith M."/>
            <person name="Glithero R."/>
            <person name="Howden P."/>
            <person name="Barker N."/>
            <person name="Lloyd C."/>
            <person name="Stevens C."/>
            <person name="Harley J."/>
            <person name="Holt K."/>
            <person name="Panagiotidis G."/>
            <person name="Lovell J."/>
            <person name="Beasley H."/>
            <person name="Henderson C."/>
            <person name="Gordon D."/>
            <person name="Auger K."/>
            <person name="Wright D."/>
            <person name="Collins J."/>
            <person name="Raisen C."/>
            <person name="Dyer L."/>
            <person name="Leung K."/>
            <person name="Robertson L."/>
            <person name="Ambridge K."/>
            <person name="Leongamornlert D."/>
            <person name="McGuire S."/>
            <person name="Gilderthorp R."/>
            <person name="Griffiths C."/>
            <person name="Manthravadi D."/>
            <person name="Nichol S."/>
            <person name="Barker G."/>
            <person name="Whitehead S."/>
            <person name="Kay M."/>
            <person name="Brown J."/>
            <person name="Murnane C."/>
            <person name="Gray E."/>
            <person name="Humphries M."/>
            <person name="Sycamore N."/>
            <person name="Barker D."/>
            <person name="Saunders D."/>
            <person name="Wallis J."/>
            <person name="Babbage A."/>
            <person name="Hammond S."/>
            <person name="Mashreghi-Mohammadi M."/>
            <person name="Barr L."/>
            <person name="Martin S."/>
            <person name="Wray P."/>
            <person name="Ellington A."/>
            <person name="Matthews N."/>
            <person name="Ellwood M."/>
            <person name="Woodmansey R."/>
            <person name="Clark G."/>
            <person name="Cooper J."/>
            <person name="Tromans A."/>
            <person name="Grafham D."/>
            <person name="Skuce C."/>
            <person name="Pandian R."/>
            <person name="Andrews R."/>
            <person name="Harrison E."/>
            <person name="Kimberley A."/>
            <person name="Garnett J."/>
            <person name="Fosker N."/>
            <person name="Hall R."/>
            <person name="Garner P."/>
            <person name="Kelly D."/>
            <person name="Bird C."/>
            <person name="Palmer S."/>
            <person name="Gehring I."/>
            <person name="Berger A."/>
            <person name="Dooley C.M."/>
            <person name="Ersan-Urun Z."/>
            <person name="Eser C."/>
            <person name="Geiger H."/>
            <person name="Geisler M."/>
            <person name="Karotki L."/>
            <person name="Kirn A."/>
            <person name="Konantz J."/>
            <person name="Konantz M."/>
            <person name="Oberlander M."/>
            <person name="Rudolph-Geiger S."/>
            <person name="Teucke M."/>
            <person name="Lanz C."/>
            <person name="Raddatz G."/>
            <person name="Osoegawa K."/>
            <person name="Zhu B."/>
            <person name="Rapp A."/>
            <person name="Widaa S."/>
            <person name="Langford C."/>
            <person name="Yang F."/>
            <person name="Schuster S.C."/>
            <person name="Carter N.P."/>
            <person name="Harrow J."/>
            <person name="Ning Z."/>
            <person name="Herrero J."/>
            <person name="Searle S.M."/>
            <person name="Enright A."/>
            <person name="Geisler R."/>
            <person name="Plasterk R.H."/>
            <person name="Lee C."/>
            <person name="Westerfield M."/>
            <person name="de Jong P.J."/>
            <person name="Zon L.I."/>
            <person name="Postlethwait J.H."/>
            <person name="Nusslein-Volhard C."/>
            <person name="Hubbard T.J."/>
            <person name="Roest Crollius H."/>
            <person name="Rogers J."/>
            <person name="Stemple D.L."/>
        </authorList>
    </citation>
    <scope>NUCLEOTIDE SEQUENCE [LARGE SCALE GENOMIC DNA]</scope>
    <source>
        <strain>Tuebingen</strain>
    </source>
</reference>
<reference key="2">
    <citation type="submission" date="2003-01" db="EMBL/GenBank/DDBJ databases">
        <authorList>
            <consortium name="NIH - Zebrafish Gene Collection (ZGC) project"/>
        </authorList>
    </citation>
    <scope>NUCLEOTIDE SEQUENCE [LARGE SCALE MRNA]</scope>
</reference>
<reference key="3">
    <citation type="journal article" date="2019" name="Biophys. J.">
        <title>Rad54 Phosphorylation Promotes Homologous Recombination by Balancing Rad54 Mobility and DNA Binding.</title>
        <authorList>
            <person name="Lengert N."/>
            <person name="Spies J."/>
            <person name="Drossel B."/>
        </authorList>
    </citation>
    <scope>PHOSPHORYLATION AT SER-566 AND SER-567</scope>
    <scope>SUBUNIT</scope>
    <scope>FUNCTION</scope>
    <scope>INTERACTION WITH RAD51</scope>
</reference>
<reference evidence="8" key="4">
    <citation type="journal article" date="2005" name="Nat. Struct. Mol. Biol.">
        <title>Structure of the SWI2/SNF2 chromatin-remodeling domain of eukaryotic Rad54.</title>
        <authorList>
            <person name="Thoma N.H."/>
            <person name="Czyzewski B.K."/>
            <person name="Alexeev A.A."/>
            <person name="Mazin A.V."/>
            <person name="Kowalczykowski S.C."/>
            <person name="Pavletich N.P."/>
        </authorList>
    </citation>
    <scope>X-RAY CRYSTALLOGRAPHY (3.00 ANGSTROMS) OF 92-735</scope>
</reference>
<dbReference type="EC" id="3.6.4.12" evidence="2"/>
<dbReference type="EMBL" id="CU499314">
    <property type="status" value="NOT_ANNOTATED_CDS"/>
    <property type="molecule type" value="Genomic_DNA"/>
</dbReference>
<dbReference type="EMBL" id="CU693449">
    <property type="status" value="NOT_ANNOTATED_CDS"/>
    <property type="molecule type" value="Genomic_DNA"/>
</dbReference>
<dbReference type="EMBL" id="BC046050">
    <property type="protein sequence ID" value="AAH46050.1"/>
    <property type="molecule type" value="mRNA"/>
</dbReference>
<dbReference type="RefSeq" id="NP_957438.1">
    <property type="nucleotide sequence ID" value="NM_201144.1"/>
</dbReference>
<dbReference type="PDB" id="1Z3I">
    <property type="method" value="X-ray"/>
    <property type="resolution" value="3.00 A"/>
    <property type="chains" value="X=92-735"/>
</dbReference>
<dbReference type="PDBsum" id="1Z3I"/>
<dbReference type="SMR" id="F1Q8K0"/>
<dbReference type="FunCoup" id="F1Q8K0">
    <property type="interactions" value="1617"/>
</dbReference>
<dbReference type="STRING" id="7955.ENSDARP00000007237"/>
<dbReference type="iPTMnet" id="F1Q8K0"/>
<dbReference type="PaxDb" id="7955-ENSDARP00000007237"/>
<dbReference type="Ensembl" id="ENSDART00000011785">
    <property type="protein sequence ID" value="ENSDARP00000007237"/>
    <property type="gene ID" value="ENSDARG00000018623"/>
</dbReference>
<dbReference type="GeneID" id="394119"/>
<dbReference type="KEGG" id="dre:394119"/>
<dbReference type="AGR" id="ZFIN:ZDB-GENE-040426-968"/>
<dbReference type="CTD" id="8438"/>
<dbReference type="ZFIN" id="ZDB-GENE-040426-968">
    <property type="gene designation" value="rad54l"/>
</dbReference>
<dbReference type="eggNOG" id="KOG0390">
    <property type="taxonomic scope" value="Eukaryota"/>
</dbReference>
<dbReference type="HOGENOM" id="CLU_000315_10_2_1"/>
<dbReference type="InParanoid" id="F1Q8K0"/>
<dbReference type="OMA" id="YTEHERM"/>
<dbReference type="OrthoDB" id="413460at2759"/>
<dbReference type="PhylomeDB" id="F1Q8K0"/>
<dbReference type="TreeFam" id="TF101224"/>
<dbReference type="EvolutionaryTrace" id="F1Q8K0"/>
<dbReference type="PRO" id="PR:F1Q8K0"/>
<dbReference type="Proteomes" id="UP000000437">
    <property type="component" value="Chromosome 6"/>
</dbReference>
<dbReference type="Bgee" id="ENSDARG00000018623">
    <property type="expression patterns" value="Expressed in testis and 23 other cell types or tissues"/>
</dbReference>
<dbReference type="GO" id="GO:0005634">
    <property type="term" value="C:nucleus"/>
    <property type="evidence" value="ECO:0000318"/>
    <property type="project" value="GO_Central"/>
</dbReference>
<dbReference type="GO" id="GO:0005524">
    <property type="term" value="F:ATP binding"/>
    <property type="evidence" value="ECO:0007669"/>
    <property type="project" value="UniProtKB-KW"/>
</dbReference>
<dbReference type="GO" id="GO:0008094">
    <property type="term" value="F:ATP-dependent activity, acting on DNA"/>
    <property type="evidence" value="ECO:0000314"/>
    <property type="project" value="ZFIN"/>
</dbReference>
<dbReference type="GO" id="GO:0003677">
    <property type="term" value="F:DNA binding"/>
    <property type="evidence" value="ECO:0000250"/>
    <property type="project" value="ZFIN"/>
</dbReference>
<dbReference type="GO" id="GO:0015616">
    <property type="term" value="F:DNA translocase activity"/>
    <property type="evidence" value="ECO:0000318"/>
    <property type="project" value="GO_Central"/>
</dbReference>
<dbReference type="GO" id="GO:0004386">
    <property type="term" value="F:helicase activity"/>
    <property type="evidence" value="ECO:0007669"/>
    <property type="project" value="UniProtKB-KW"/>
</dbReference>
<dbReference type="GO" id="GO:0016787">
    <property type="term" value="F:hydrolase activity"/>
    <property type="evidence" value="ECO:0007669"/>
    <property type="project" value="UniProtKB-KW"/>
</dbReference>
<dbReference type="GO" id="GO:0045003">
    <property type="term" value="P:double-strand break repair via synthesis-dependent strand annealing"/>
    <property type="evidence" value="ECO:0000318"/>
    <property type="project" value="GO_Central"/>
</dbReference>
<dbReference type="GO" id="GO:0007131">
    <property type="term" value="P:reciprocal meiotic recombination"/>
    <property type="evidence" value="ECO:0000318"/>
    <property type="project" value="GO_Central"/>
</dbReference>
<dbReference type="CDD" id="cd18067">
    <property type="entry name" value="DEXHc_RAD54A"/>
    <property type="match status" value="1"/>
</dbReference>
<dbReference type="CDD" id="cd18793">
    <property type="entry name" value="SF2_C_SNF"/>
    <property type="match status" value="1"/>
</dbReference>
<dbReference type="FunFam" id="1.20.120.850:FF:000002">
    <property type="entry name" value="DNA repair and recombination protein RAD54-like"/>
    <property type="match status" value="1"/>
</dbReference>
<dbReference type="FunFam" id="3.40.50.10810:FF:000010">
    <property type="entry name" value="DNA repair and recombination protein RAD54-like"/>
    <property type="match status" value="1"/>
</dbReference>
<dbReference type="FunFam" id="3.40.50.300:FF:000332">
    <property type="entry name" value="DNA repair and recombination protein RAD54-like"/>
    <property type="match status" value="1"/>
</dbReference>
<dbReference type="Gene3D" id="3.40.50.300">
    <property type="entry name" value="P-loop containing nucleotide triphosphate hydrolases"/>
    <property type="match status" value="1"/>
</dbReference>
<dbReference type="Gene3D" id="1.20.120.850">
    <property type="entry name" value="SWI2/SNF2 ATPases, N-terminal domain"/>
    <property type="match status" value="1"/>
</dbReference>
<dbReference type="Gene3D" id="3.40.50.10810">
    <property type="entry name" value="Tandem AAA-ATPase domain"/>
    <property type="match status" value="1"/>
</dbReference>
<dbReference type="InterPro" id="IPR014001">
    <property type="entry name" value="Helicase_ATP-bd"/>
</dbReference>
<dbReference type="InterPro" id="IPR001650">
    <property type="entry name" value="Helicase_C-like"/>
</dbReference>
<dbReference type="InterPro" id="IPR027417">
    <property type="entry name" value="P-loop_NTPase"/>
</dbReference>
<dbReference type="InterPro" id="IPR038718">
    <property type="entry name" value="SNF2-like_sf"/>
</dbReference>
<dbReference type="InterPro" id="IPR049730">
    <property type="entry name" value="SNF2/RAD54-like_C"/>
</dbReference>
<dbReference type="InterPro" id="IPR000330">
    <property type="entry name" value="SNF2_N"/>
</dbReference>
<dbReference type="InterPro" id="IPR050496">
    <property type="entry name" value="SNF2_RAD54_helicase_repair"/>
</dbReference>
<dbReference type="PANTHER" id="PTHR45629:SF7">
    <property type="entry name" value="DNA EXCISION REPAIR PROTEIN ERCC-6-RELATED"/>
    <property type="match status" value="1"/>
</dbReference>
<dbReference type="PANTHER" id="PTHR45629">
    <property type="entry name" value="SNF2/RAD54 FAMILY MEMBER"/>
    <property type="match status" value="1"/>
</dbReference>
<dbReference type="Pfam" id="PF00271">
    <property type="entry name" value="Helicase_C"/>
    <property type="match status" value="1"/>
</dbReference>
<dbReference type="Pfam" id="PF00176">
    <property type="entry name" value="SNF2-rel_dom"/>
    <property type="match status" value="1"/>
</dbReference>
<dbReference type="SMART" id="SM00487">
    <property type="entry name" value="DEXDc"/>
    <property type="match status" value="1"/>
</dbReference>
<dbReference type="SMART" id="SM00490">
    <property type="entry name" value="HELICc"/>
    <property type="match status" value="1"/>
</dbReference>
<dbReference type="SUPFAM" id="SSF52540">
    <property type="entry name" value="P-loop containing nucleoside triphosphate hydrolases"/>
    <property type="match status" value="2"/>
</dbReference>
<dbReference type="PROSITE" id="PS51192">
    <property type="entry name" value="HELICASE_ATP_BIND_1"/>
    <property type="match status" value="1"/>
</dbReference>
<dbReference type="PROSITE" id="PS51194">
    <property type="entry name" value="HELICASE_CTER"/>
    <property type="match status" value="1"/>
</dbReference>
<gene>
    <name type="primary">rad54l</name>
</gene>
<name>RAD54_DANRE</name>
<protein>
    <recommendedName>
        <fullName>DNA repair and recombination protein RAD54-like</fullName>
        <ecNumber evidence="2">3.6.4.12</ecNumber>
    </recommendedName>
</protein>
<comment type="function">
    <text evidence="1 6">Plays an essential role in homologous recombination (HR) which is a major pathway for repairing DNA double-strand breaks (DSBs), single-stranded DNA (ssDNA) gaps, and stalled or collapsed replication forks (PubMed:30961891). Acts as a molecular motor during the homology search and guides RAD51 ssDNA along a donor dsDNA thereby changing the homology search from the diffusion-based mechanism to a motor-guided mechanism. Also plays an essential role in RAD51-mediated synaptic complex formation which consists of three strands encased in a protein filament formed once homology is recognized. Once DNA strand exchange occured, dissociates RAD51 from nucleoprotein filaments formed on dsDNA (By similarity).</text>
</comment>
<comment type="catalytic activity">
    <reaction evidence="1">
        <text>ATP + H2O = ADP + phosphate + H(+)</text>
        <dbReference type="Rhea" id="RHEA:13065"/>
        <dbReference type="ChEBI" id="CHEBI:15377"/>
        <dbReference type="ChEBI" id="CHEBI:15378"/>
        <dbReference type="ChEBI" id="CHEBI:30616"/>
        <dbReference type="ChEBI" id="CHEBI:43474"/>
        <dbReference type="ChEBI" id="CHEBI:456216"/>
        <dbReference type="EC" id="3.6.4.12"/>
    </reaction>
</comment>
<comment type="subunit">
    <text evidence="6">Homohexamer (PubMed:30961891). Interacts with RAD51 (PubMed:30961891).</text>
</comment>
<comment type="PTM">
    <text evidence="6">Phosphorylated. Phosphorylations at Ser-566 and Ser-567 allow efficient removal of RAD51 filaments from DNA.</text>
</comment>
<evidence type="ECO:0000250" key="1">
    <source>
        <dbReference type="UniProtKB" id="P32863"/>
    </source>
</evidence>
<evidence type="ECO:0000250" key="2">
    <source>
        <dbReference type="UniProtKB" id="Q7ZV09"/>
    </source>
</evidence>
<evidence type="ECO:0000255" key="3">
    <source>
        <dbReference type="PROSITE-ProRule" id="PRU00541"/>
    </source>
</evidence>
<evidence type="ECO:0000255" key="4">
    <source>
        <dbReference type="PROSITE-ProRule" id="PRU00542"/>
    </source>
</evidence>
<evidence type="ECO:0000256" key="5">
    <source>
        <dbReference type="SAM" id="MobiDB-lite"/>
    </source>
</evidence>
<evidence type="ECO:0000269" key="6">
    <source>
    </source>
</evidence>
<evidence type="ECO:0000305" key="7"/>
<evidence type="ECO:0007744" key="8">
    <source>
        <dbReference type="PDB" id="1Z3I"/>
    </source>
</evidence>
<evidence type="ECO:0007829" key="9">
    <source>
        <dbReference type="PDB" id="1Z3I"/>
    </source>
</evidence>
<sequence>MRRSLAPSQVAKRKQGPDSDDEEDWEPDMEPQCKRDCREKYISPYRKPLTPLTNRPFCADGNEHEAFIRKILSKPFKIPIPNYTGVLGLRALGLRRAGVRKALHDPFEDGALVLYEPPVISAHDLIKADKEKLPVHVVVDPVLSKVLRPHQREGVKFLWDCVTGRRIENSYGCIMADEMGLGKTLQCITLIWTLLKQSPDCKPEIDKVIVVSPSSLVRNWYNEVGKWLGGRVQPVAIDGGSKDEIDSKLVNFISQQGMRIPTPILIISYETFRLHAEVLHKGKVGLVICDEGHRLKNSDNQTYLALNSMNAQRRVLISGTPIQNDLLEYFSLVHFVNSGILGTAQEFKKRFEIPILKGRDADASDKDRAAGEQKLQELISIVNRCLIRRTSDILSKYLPVKIEQVVCCNLTPLQKELYKLFLKQAKPVESLQTGKISVSSLSSITSLKKLCNHPALIYEKCLTGEEGFDGALDLFPQNYSTKAVEPQLSGKMLVLDYILAMTRTTTSDKVVLVSNYTQTLDLFEKLCRNRRYLYVRLDGTMSIKKRAKIVERFNNPSSPEFIFMLSSKAGGCGLNLIGANRLVMFDPDWNPANDEQAMARVWRDGQKKTCYIYRLLSTGTIEEKILQRQAHKKALSSCVVDEEQDVERHFSLGELRELFSLNEKTLSDTHDRFRCRRCVNGRQVRPPPDDSDCTCDLSNWHHCADKRGLRDPVLQASWDAAVSFVFHQRSHEDQRGVV</sequence>
<organism>
    <name type="scientific">Danio rerio</name>
    <name type="common">Zebrafish</name>
    <name type="synonym">Brachydanio rerio</name>
    <dbReference type="NCBI Taxonomy" id="7955"/>
    <lineage>
        <taxon>Eukaryota</taxon>
        <taxon>Metazoa</taxon>
        <taxon>Chordata</taxon>
        <taxon>Craniata</taxon>
        <taxon>Vertebrata</taxon>
        <taxon>Euteleostomi</taxon>
        <taxon>Actinopterygii</taxon>
        <taxon>Neopterygii</taxon>
        <taxon>Teleostei</taxon>
        <taxon>Ostariophysi</taxon>
        <taxon>Cypriniformes</taxon>
        <taxon>Danionidae</taxon>
        <taxon>Danioninae</taxon>
        <taxon>Danio</taxon>
    </lineage>
</organism>
<proteinExistence type="evidence at protein level"/>
<feature type="chain" id="PRO_0000451560" description="DNA repair and recombination protein RAD54-like">
    <location>
        <begin position="1"/>
        <end position="738"/>
    </location>
</feature>
<feature type="domain" description="Helicase ATP-binding" evidence="3">
    <location>
        <begin position="164"/>
        <end position="339"/>
    </location>
</feature>
<feature type="domain" description="Helicase C-terminal" evidence="4">
    <location>
        <begin position="493"/>
        <end position="647"/>
    </location>
</feature>
<feature type="region of interest" description="Disordered" evidence="5">
    <location>
        <begin position="1"/>
        <end position="31"/>
    </location>
</feature>
<feature type="short sequence motif" description="DEAH box" evidence="3">
    <location>
        <begin position="290"/>
        <end position="293"/>
    </location>
</feature>
<feature type="compositionally biased region" description="Acidic residues" evidence="5">
    <location>
        <begin position="18"/>
        <end position="29"/>
    </location>
</feature>
<feature type="binding site" evidence="3">
    <location>
        <begin position="177"/>
        <end position="184"/>
    </location>
    <ligand>
        <name>ATP</name>
        <dbReference type="ChEBI" id="CHEBI:30616"/>
    </ligand>
</feature>
<feature type="modified residue" description="Phosphoserine" evidence="6">
    <location>
        <position position="566"/>
    </location>
</feature>
<feature type="modified residue" description="Phosphoserine" evidence="6">
    <location>
        <position position="567"/>
    </location>
</feature>
<feature type="sequence conflict" description="In Ref. 2; AAH46050." evidence="7" ref="2">
    <original>C</original>
    <variation>S</variation>
    <location>
        <position position="33"/>
    </location>
</feature>
<feature type="sequence conflict" description="In Ref. 2; AAH46050." evidence="7" ref="2">
    <original>F</original>
    <variation>V</variation>
    <location>
        <position position="57"/>
    </location>
</feature>
<feature type="sequence conflict" description="In Ref. 2; AAH46050." evidence="7" ref="2">
    <original>V</original>
    <variation>A</variation>
    <location>
        <position position="119"/>
    </location>
</feature>
<feature type="strand" evidence="9">
    <location>
        <begin position="97"/>
        <end position="99"/>
    </location>
</feature>
<feature type="strand" evidence="9">
    <location>
        <begin position="113"/>
        <end position="115"/>
    </location>
</feature>
<feature type="helix" evidence="9">
    <location>
        <begin position="122"/>
        <end position="127"/>
    </location>
</feature>
<feature type="helix" evidence="9">
    <location>
        <begin position="130"/>
        <end position="132"/>
    </location>
</feature>
<feature type="helix" evidence="9">
    <location>
        <begin position="141"/>
        <end position="144"/>
    </location>
</feature>
<feature type="helix" evidence="9">
    <location>
        <begin position="149"/>
        <end position="162"/>
    </location>
</feature>
<feature type="strand" evidence="9">
    <location>
        <begin position="165"/>
        <end position="167"/>
    </location>
</feature>
<feature type="strand" evidence="9">
    <location>
        <begin position="172"/>
        <end position="175"/>
    </location>
</feature>
<feature type="helix" evidence="9">
    <location>
        <begin position="183"/>
        <end position="196"/>
    </location>
</feature>
<feature type="strand" evidence="9">
    <location>
        <begin position="208"/>
        <end position="212"/>
    </location>
</feature>
<feature type="helix" evidence="9">
    <location>
        <begin position="214"/>
        <end position="216"/>
    </location>
</feature>
<feature type="helix" evidence="9">
    <location>
        <begin position="217"/>
        <end position="228"/>
    </location>
</feature>
<feature type="helix" evidence="9">
    <location>
        <begin position="229"/>
        <end position="231"/>
    </location>
</feature>
<feature type="strand" evidence="9">
    <location>
        <begin position="234"/>
        <end position="237"/>
    </location>
</feature>
<feature type="helix" evidence="9">
    <location>
        <begin position="242"/>
        <end position="253"/>
    </location>
</feature>
<feature type="strand" evidence="9">
    <location>
        <begin position="264"/>
        <end position="268"/>
    </location>
</feature>
<feature type="helix" evidence="9">
    <location>
        <begin position="269"/>
        <end position="275"/>
    </location>
</feature>
<feature type="turn" evidence="9">
    <location>
        <begin position="276"/>
        <end position="281"/>
    </location>
</feature>
<feature type="strand" evidence="9">
    <location>
        <begin position="286"/>
        <end position="289"/>
    </location>
</feature>
<feature type="helix" evidence="9">
    <location>
        <begin position="292"/>
        <end position="294"/>
    </location>
</feature>
<feature type="helix" evidence="9">
    <location>
        <begin position="300"/>
        <end position="309"/>
    </location>
</feature>
<feature type="strand" evidence="9">
    <location>
        <begin position="312"/>
        <end position="317"/>
    </location>
</feature>
<feature type="helix" evidence="9">
    <location>
        <begin position="323"/>
        <end position="328"/>
    </location>
</feature>
<feature type="helix" evidence="9">
    <location>
        <begin position="330"/>
        <end position="341"/>
    </location>
</feature>
<feature type="helix" evidence="9">
    <location>
        <begin position="344"/>
        <end position="350"/>
    </location>
</feature>
<feature type="helix" evidence="9">
    <location>
        <begin position="352"/>
        <end position="359"/>
    </location>
</feature>
<feature type="helix" evidence="9">
    <location>
        <begin position="366"/>
        <end position="385"/>
    </location>
</feature>
<feature type="helix" evidence="9">
    <location>
        <begin position="391"/>
        <end position="396"/>
    </location>
</feature>
<feature type="strand" evidence="9">
    <location>
        <begin position="401"/>
        <end position="408"/>
    </location>
</feature>
<feature type="helix" evidence="9">
    <location>
        <begin position="412"/>
        <end position="425"/>
    </location>
</feature>
<feature type="helix" evidence="9">
    <location>
        <begin position="427"/>
        <end position="429"/>
    </location>
</feature>
<feature type="helix" evidence="9">
    <location>
        <begin position="438"/>
        <end position="452"/>
    </location>
</feature>
<feature type="helix" evidence="9">
    <location>
        <begin position="455"/>
        <end position="463"/>
    </location>
</feature>
<feature type="helix" evidence="9">
    <location>
        <begin position="471"/>
        <end position="473"/>
    </location>
</feature>
<feature type="strand" evidence="9">
    <location>
        <begin position="481"/>
        <end position="483"/>
    </location>
</feature>
<feature type="helix" evidence="9">
    <location>
        <begin position="486"/>
        <end position="488"/>
    </location>
</feature>
<feature type="helix" evidence="9">
    <location>
        <begin position="490"/>
        <end position="505"/>
    </location>
</feature>
<feature type="strand" evidence="9">
    <location>
        <begin position="509"/>
        <end position="515"/>
    </location>
</feature>
<feature type="helix" evidence="9">
    <location>
        <begin position="517"/>
        <end position="530"/>
    </location>
</feature>
<feature type="strand" evidence="9">
    <location>
        <begin position="534"/>
        <end position="537"/>
    </location>
</feature>
<feature type="helix" evidence="9">
    <location>
        <begin position="543"/>
        <end position="554"/>
    </location>
</feature>
<feature type="strand" evidence="9">
    <location>
        <begin position="562"/>
        <end position="566"/>
    </location>
</feature>
<feature type="helix" evidence="9">
    <location>
        <begin position="567"/>
        <end position="569"/>
    </location>
</feature>
<feature type="strand" evidence="9">
    <location>
        <begin position="579"/>
        <end position="584"/>
    </location>
</feature>
<feature type="helix" evidence="9">
    <location>
        <begin position="591"/>
        <end position="598"/>
    </location>
</feature>
<feature type="strand" evidence="9">
    <location>
        <begin position="601"/>
        <end position="603"/>
    </location>
</feature>
<feature type="strand" evidence="9">
    <location>
        <begin position="610"/>
        <end position="617"/>
    </location>
</feature>
<feature type="helix" evidence="9">
    <location>
        <begin position="621"/>
        <end position="634"/>
    </location>
</feature>
<feature type="strand" evidence="9">
    <location>
        <begin position="643"/>
        <end position="645"/>
    </location>
</feature>
<feature type="helix" evidence="9">
    <location>
        <begin position="652"/>
        <end position="658"/>
    </location>
</feature>
<feature type="helix" evidence="9">
    <location>
        <begin position="668"/>
        <end position="673"/>
    </location>
</feature>
<feature type="strand" evidence="9">
    <location>
        <begin position="676"/>
        <end position="679"/>
    </location>
</feature>
<feature type="helix" evidence="9">
    <location>
        <begin position="697"/>
        <end position="699"/>
    </location>
</feature>
<feature type="strand" evidence="9">
    <location>
        <begin position="700"/>
        <end position="706"/>
    </location>
</feature>
<feature type="helix" evidence="9">
    <location>
        <begin position="712"/>
        <end position="717"/>
    </location>
</feature>
<feature type="strand" evidence="9">
    <location>
        <begin position="722"/>
        <end position="731"/>
    </location>
</feature>
<keyword id="KW-0002">3D-structure</keyword>
<keyword id="KW-0067">ATP-binding</keyword>
<keyword id="KW-0347">Helicase</keyword>
<keyword id="KW-0378">Hydrolase</keyword>
<keyword id="KW-0547">Nucleotide-binding</keyword>
<keyword id="KW-0597">Phosphoprotein</keyword>
<keyword id="KW-1185">Reference proteome</keyword>